<gene>
    <name evidence="11" type="primary">SRP54</name>
</gene>
<organism>
    <name type="scientific">Homo sapiens</name>
    <name type="common">Human</name>
    <dbReference type="NCBI Taxonomy" id="9606"/>
    <lineage>
        <taxon>Eukaryota</taxon>
        <taxon>Metazoa</taxon>
        <taxon>Chordata</taxon>
        <taxon>Craniata</taxon>
        <taxon>Vertebrata</taxon>
        <taxon>Euteleostomi</taxon>
        <taxon>Mammalia</taxon>
        <taxon>Eutheria</taxon>
        <taxon>Euarchontoglires</taxon>
        <taxon>Primates</taxon>
        <taxon>Haplorrhini</taxon>
        <taxon>Catarrhini</taxon>
        <taxon>Hominidae</taxon>
        <taxon>Homo</taxon>
    </lineage>
</organism>
<protein>
    <recommendedName>
        <fullName>Signal recognition particle subunit SRP54</fullName>
        <ecNumber evidence="5 7">3.6.5.4</ecNumber>
    </recommendedName>
    <alternativeName>
        <fullName evidence="10">Signal recognition particle 54 kDa protein</fullName>
    </alternativeName>
</protein>
<feature type="chain" id="PRO_0000101192" description="Signal recognition particle subunit SRP54">
    <location>
        <begin position="1"/>
        <end position="504"/>
    </location>
</feature>
<feature type="region of interest" description="NG domain" evidence="9">
    <location>
        <begin position="1"/>
        <end position="295"/>
    </location>
</feature>
<feature type="region of interest" description="M-domain" evidence="9">
    <location>
        <begin position="296"/>
        <end position="504"/>
    </location>
</feature>
<feature type="binding site" evidence="1">
    <location>
        <begin position="108"/>
        <end position="115"/>
    </location>
    <ligand>
        <name>GTP</name>
        <dbReference type="ChEBI" id="CHEBI:37565"/>
    </ligand>
</feature>
<feature type="binding site" evidence="1">
    <location>
        <begin position="190"/>
        <end position="194"/>
    </location>
    <ligand>
        <name>GTP</name>
        <dbReference type="ChEBI" id="CHEBI:37565"/>
    </ligand>
</feature>
<feature type="binding site" evidence="1">
    <location>
        <begin position="248"/>
        <end position="251"/>
    </location>
    <ligand>
        <name>GTP</name>
        <dbReference type="ChEBI" id="CHEBI:37565"/>
    </ligand>
</feature>
<feature type="splice variant" id="VSP_043696" description="In isoform 2." evidence="8">
    <original>MVLADLGRKITSALRSLSNATIINEEVLNAMLKEVCTALLEADVNIKLVKQLRENVK</original>
    <variation>MPPLSMKR</variation>
    <location>
        <begin position="1"/>
        <end position="57"/>
    </location>
</feature>
<feature type="sequence variant" id="VAR_083566" description="In SCN8." evidence="6">
    <original>G</original>
    <variation>R</variation>
    <location>
        <position position="113"/>
    </location>
</feature>
<feature type="sequence variant" id="VAR_083567" description="In SCN8; decreases expression levels; decreases GTPase activity; decreases neutrophil numbers and migration capacity." evidence="5">
    <original>T</original>
    <variation>A</variation>
    <location>
        <position position="115"/>
    </location>
</feature>
<feature type="sequence variant" id="VAR_083568" description="In SCN8; decreases expression levels; slightly decreases GTPase activity; decreases neutrophil numbers and migration capacity; decreased granulocyte proliferation; delayed granulocytic differentiation; impaired signaling; increased apoptosis; induced autophagy." evidence="5 6">
    <location>
        <position position="117"/>
    </location>
</feature>
<feature type="sequence variant" id="VAR_083569" description="In SCN8; decreased granulocyte proliferation; increased apoptosis." evidence="6">
    <original>C</original>
    <variation>Y</variation>
    <location>
        <position position="118"/>
    </location>
</feature>
<feature type="sequence variant" id="VAR_083570" description="In SCN8; decreased granulocyte proliferation; delayed granulocytic differentiation; impaired signaling; induced autophagy." evidence="6">
    <original>C</original>
    <variation>Y</variation>
    <location>
        <position position="136"/>
    </location>
</feature>
<feature type="sequence variant" id="VAR_083571" description="In SCN8; decreased granulocyte proliferation; induced autophagy." evidence="6">
    <original>A</original>
    <variation>D</variation>
    <location>
        <position position="223"/>
    </location>
</feature>
<feature type="sequence variant" id="VAR_083572" description="In SCN8; decreases expression levels; decreases neutrophil numbers and migration capacity; faster dissociation of the interaction with the SRP receptor subunit SRPRA; reduced SR compaction; impaired interaction with SR; impaired detachment from ribosome; effects on enzymatic activity are unclear as both normal and reduced GTPase activity have been reported." evidence="5 6 7">
    <original>G</original>
    <variation>E</variation>
    <location>
        <position position="226"/>
    </location>
</feature>
<feature type="sequence variant" id="VAR_083573" description="In SCN8." evidence="6">
    <original>G</original>
    <variation>D</variation>
    <location>
        <position position="274"/>
    </location>
</feature>
<feature type="helix" evidence="14">
    <location>
        <begin position="4"/>
        <end position="19"/>
    </location>
</feature>
<feature type="helix" evidence="14">
    <location>
        <begin position="25"/>
        <end position="40"/>
    </location>
</feature>
<feature type="turn" evidence="14">
    <location>
        <begin position="41"/>
        <end position="43"/>
    </location>
</feature>
<feature type="helix" evidence="14">
    <location>
        <begin position="46"/>
        <end position="59"/>
    </location>
</feature>
<feature type="turn" evidence="16">
    <location>
        <begin position="62"/>
        <end position="64"/>
    </location>
</feature>
<feature type="helix" evidence="14">
    <location>
        <begin position="71"/>
        <end position="86"/>
    </location>
</feature>
<feature type="strand" evidence="14">
    <location>
        <begin position="102"/>
        <end position="108"/>
    </location>
</feature>
<feature type="helix" evidence="14">
    <location>
        <begin position="114"/>
        <end position="127"/>
    </location>
</feature>
<feature type="strand" evidence="14">
    <location>
        <begin position="132"/>
        <end position="136"/>
    </location>
</feature>
<feature type="helix" evidence="14">
    <location>
        <begin position="143"/>
        <end position="155"/>
    </location>
</feature>
<feature type="strand" evidence="15">
    <location>
        <begin position="159"/>
        <end position="161"/>
    </location>
</feature>
<feature type="helix" evidence="14">
    <location>
        <begin position="168"/>
        <end position="181"/>
    </location>
</feature>
<feature type="strand" evidence="14">
    <location>
        <begin position="185"/>
        <end position="190"/>
    </location>
</feature>
<feature type="helix" evidence="14">
    <location>
        <begin position="198"/>
        <end position="212"/>
    </location>
</feature>
<feature type="strand" evidence="14">
    <location>
        <begin position="215"/>
        <end position="222"/>
    </location>
</feature>
<feature type="helix" evidence="14">
    <location>
        <begin position="223"/>
        <end position="228"/>
    </location>
</feature>
<feature type="helix" evidence="14">
    <location>
        <begin position="229"/>
        <end position="237"/>
    </location>
</feature>
<feature type="strand" evidence="14">
    <location>
        <begin position="241"/>
        <end position="248"/>
    </location>
</feature>
<feature type="strand" evidence="14">
    <location>
        <begin position="251"/>
        <end position="254"/>
    </location>
</feature>
<feature type="helix" evidence="14">
    <location>
        <begin position="256"/>
        <end position="265"/>
    </location>
</feature>
<feature type="strand" evidence="14">
    <location>
        <begin position="270"/>
        <end position="274"/>
    </location>
</feature>
<feature type="strand" evidence="14">
    <location>
        <begin position="276"/>
        <end position="278"/>
    </location>
</feature>
<feature type="strand" evidence="14">
    <location>
        <begin position="282"/>
        <end position="284"/>
    </location>
</feature>
<feature type="helix" evidence="14">
    <location>
        <begin position="287"/>
        <end position="295"/>
    </location>
</feature>
<feature type="helix" evidence="13">
    <location>
        <begin position="329"/>
        <end position="341"/>
    </location>
</feature>
<feature type="helix" evidence="13">
    <location>
        <begin position="343"/>
        <end position="351"/>
    </location>
</feature>
<feature type="turn" evidence="13">
    <location>
        <begin position="357"/>
        <end position="360"/>
    </location>
</feature>
<feature type="helix" evidence="13">
    <location>
        <begin position="365"/>
        <end position="379"/>
    </location>
</feature>
<feature type="helix" evidence="13">
    <location>
        <begin position="384"/>
        <end position="388"/>
    </location>
</feature>
<feature type="turn" evidence="13">
    <location>
        <begin position="390"/>
        <end position="392"/>
    </location>
</feature>
<feature type="helix" evidence="13">
    <location>
        <begin position="393"/>
        <end position="398"/>
    </location>
</feature>
<feature type="helix" evidence="13">
    <location>
        <begin position="401"/>
        <end position="409"/>
    </location>
</feature>
<feature type="helix" evidence="13">
    <location>
        <begin position="414"/>
        <end position="430"/>
    </location>
</feature>
<keyword id="KW-0002">3D-structure</keyword>
<keyword id="KW-0025">Alternative splicing</keyword>
<keyword id="KW-0963">Cytoplasm</keyword>
<keyword id="KW-0225">Disease variant</keyword>
<keyword id="KW-0256">Endoplasmic reticulum</keyword>
<keyword id="KW-0342">GTP-binding</keyword>
<keyword id="KW-0378">Hydrolase</keyword>
<keyword id="KW-0547">Nucleotide-binding</keyword>
<keyword id="KW-0539">Nucleus</keyword>
<keyword id="KW-1267">Proteomics identification</keyword>
<keyword id="KW-1185">Reference proteome</keyword>
<keyword id="KW-0687">Ribonucleoprotein</keyword>
<keyword id="KW-0694">RNA-binding</keyword>
<keyword id="KW-0733">Signal recognition particle</keyword>
<name>SRP54_HUMAN</name>
<reference key="1">
    <citation type="journal article" date="1996" name="DNA Seq.">
        <title>Sequence of the highly conserved gene encoding the human 54kDa subunit of signal recognition particle.</title>
        <authorList>
            <person name="Patel S."/>
            <person name="Austen B."/>
        </authorList>
    </citation>
    <scope>NUCLEOTIDE SEQUENCE [GENOMIC DNA]</scope>
    <source>
        <tissue>Placenta</tissue>
    </source>
</reference>
<reference key="2">
    <citation type="journal article" date="1998" name="Gene">
        <title>Protein SRP54 of human signal recognition particle: cloning, expression, and comparative analysis of functional sites.</title>
        <authorList>
            <person name="Gowda K."/>
            <person name="Black S.D."/>
            <person name="Moeller I."/>
            <person name="Sakakibara Y."/>
            <person name="Liu M.C."/>
            <person name="Zwieb C."/>
        </authorList>
    </citation>
    <scope>NUCLEOTIDE SEQUENCE [MRNA] (ISOFORM 1)</scope>
</reference>
<reference key="3">
    <citation type="journal article" date="2004" name="Nat. Genet.">
        <title>Complete sequencing and characterization of 21,243 full-length human cDNAs.</title>
        <authorList>
            <person name="Ota T."/>
            <person name="Suzuki Y."/>
            <person name="Nishikawa T."/>
            <person name="Otsuki T."/>
            <person name="Sugiyama T."/>
            <person name="Irie R."/>
            <person name="Wakamatsu A."/>
            <person name="Hayashi K."/>
            <person name="Sato H."/>
            <person name="Nagai K."/>
            <person name="Kimura K."/>
            <person name="Makita H."/>
            <person name="Sekine M."/>
            <person name="Obayashi M."/>
            <person name="Nishi T."/>
            <person name="Shibahara T."/>
            <person name="Tanaka T."/>
            <person name="Ishii S."/>
            <person name="Yamamoto J."/>
            <person name="Saito K."/>
            <person name="Kawai Y."/>
            <person name="Isono Y."/>
            <person name="Nakamura Y."/>
            <person name="Nagahari K."/>
            <person name="Murakami K."/>
            <person name="Yasuda T."/>
            <person name="Iwayanagi T."/>
            <person name="Wagatsuma M."/>
            <person name="Shiratori A."/>
            <person name="Sudo H."/>
            <person name="Hosoiri T."/>
            <person name="Kaku Y."/>
            <person name="Kodaira H."/>
            <person name="Kondo H."/>
            <person name="Sugawara M."/>
            <person name="Takahashi M."/>
            <person name="Kanda K."/>
            <person name="Yokoi T."/>
            <person name="Furuya T."/>
            <person name="Kikkawa E."/>
            <person name="Omura Y."/>
            <person name="Abe K."/>
            <person name="Kamihara K."/>
            <person name="Katsuta N."/>
            <person name="Sato K."/>
            <person name="Tanikawa M."/>
            <person name="Yamazaki M."/>
            <person name="Ninomiya K."/>
            <person name="Ishibashi T."/>
            <person name="Yamashita H."/>
            <person name="Murakawa K."/>
            <person name="Fujimori K."/>
            <person name="Tanai H."/>
            <person name="Kimata M."/>
            <person name="Watanabe M."/>
            <person name="Hiraoka S."/>
            <person name="Chiba Y."/>
            <person name="Ishida S."/>
            <person name="Ono Y."/>
            <person name="Takiguchi S."/>
            <person name="Watanabe S."/>
            <person name="Yosida M."/>
            <person name="Hotuta T."/>
            <person name="Kusano J."/>
            <person name="Kanehori K."/>
            <person name="Takahashi-Fujii A."/>
            <person name="Hara H."/>
            <person name="Tanase T.-O."/>
            <person name="Nomura Y."/>
            <person name="Togiya S."/>
            <person name="Komai F."/>
            <person name="Hara R."/>
            <person name="Takeuchi K."/>
            <person name="Arita M."/>
            <person name="Imose N."/>
            <person name="Musashino K."/>
            <person name="Yuuki H."/>
            <person name="Oshima A."/>
            <person name="Sasaki N."/>
            <person name="Aotsuka S."/>
            <person name="Yoshikawa Y."/>
            <person name="Matsunawa H."/>
            <person name="Ichihara T."/>
            <person name="Shiohata N."/>
            <person name="Sano S."/>
            <person name="Moriya S."/>
            <person name="Momiyama H."/>
            <person name="Satoh N."/>
            <person name="Takami S."/>
            <person name="Terashima Y."/>
            <person name="Suzuki O."/>
            <person name="Nakagawa S."/>
            <person name="Senoh A."/>
            <person name="Mizoguchi H."/>
            <person name="Goto Y."/>
            <person name="Shimizu F."/>
            <person name="Wakebe H."/>
            <person name="Hishigaki H."/>
            <person name="Watanabe T."/>
            <person name="Sugiyama A."/>
            <person name="Takemoto M."/>
            <person name="Kawakami B."/>
            <person name="Yamazaki M."/>
            <person name="Watanabe K."/>
            <person name="Kumagai A."/>
            <person name="Itakura S."/>
            <person name="Fukuzumi Y."/>
            <person name="Fujimori Y."/>
            <person name="Komiyama M."/>
            <person name="Tashiro H."/>
            <person name="Tanigami A."/>
            <person name="Fujiwara T."/>
            <person name="Ono T."/>
            <person name="Yamada K."/>
            <person name="Fujii Y."/>
            <person name="Ozaki K."/>
            <person name="Hirao M."/>
            <person name="Ohmori Y."/>
            <person name="Kawabata A."/>
            <person name="Hikiji T."/>
            <person name="Kobatake N."/>
            <person name="Inagaki H."/>
            <person name="Ikema Y."/>
            <person name="Okamoto S."/>
            <person name="Okitani R."/>
            <person name="Kawakami T."/>
            <person name="Noguchi S."/>
            <person name="Itoh T."/>
            <person name="Shigeta K."/>
            <person name="Senba T."/>
            <person name="Matsumura K."/>
            <person name="Nakajima Y."/>
            <person name="Mizuno T."/>
            <person name="Morinaga M."/>
            <person name="Sasaki M."/>
            <person name="Togashi T."/>
            <person name="Oyama M."/>
            <person name="Hata H."/>
            <person name="Watanabe M."/>
            <person name="Komatsu T."/>
            <person name="Mizushima-Sugano J."/>
            <person name="Satoh T."/>
            <person name="Shirai Y."/>
            <person name="Takahashi Y."/>
            <person name="Nakagawa K."/>
            <person name="Okumura K."/>
            <person name="Nagase T."/>
            <person name="Nomura N."/>
            <person name="Kikuchi H."/>
            <person name="Masuho Y."/>
            <person name="Yamashita R."/>
            <person name="Nakai K."/>
            <person name="Yada T."/>
            <person name="Nakamura Y."/>
            <person name="Ohara O."/>
            <person name="Isogai T."/>
            <person name="Sugano S."/>
        </authorList>
    </citation>
    <scope>NUCLEOTIDE SEQUENCE [LARGE SCALE MRNA] (ISOFORMS 1 AND 2)</scope>
    <source>
        <tissue>Trachea</tissue>
    </source>
</reference>
<reference key="4">
    <citation type="journal article" date="2003" name="Nature">
        <title>The DNA sequence and analysis of human chromosome 14.</title>
        <authorList>
            <person name="Heilig R."/>
            <person name="Eckenberg R."/>
            <person name="Petit J.-L."/>
            <person name="Fonknechten N."/>
            <person name="Da Silva C."/>
            <person name="Cattolico L."/>
            <person name="Levy M."/>
            <person name="Barbe V."/>
            <person name="De Berardinis V."/>
            <person name="Ureta-Vidal A."/>
            <person name="Pelletier E."/>
            <person name="Vico V."/>
            <person name="Anthouard V."/>
            <person name="Rowen L."/>
            <person name="Madan A."/>
            <person name="Qin S."/>
            <person name="Sun H."/>
            <person name="Du H."/>
            <person name="Pepin K."/>
            <person name="Artiguenave F."/>
            <person name="Robert C."/>
            <person name="Cruaud C."/>
            <person name="Bruels T."/>
            <person name="Jaillon O."/>
            <person name="Friedlander L."/>
            <person name="Samson G."/>
            <person name="Brottier P."/>
            <person name="Cure S."/>
            <person name="Segurens B."/>
            <person name="Aniere F."/>
            <person name="Samain S."/>
            <person name="Crespeau H."/>
            <person name="Abbasi N."/>
            <person name="Aiach N."/>
            <person name="Boscus D."/>
            <person name="Dickhoff R."/>
            <person name="Dors M."/>
            <person name="Dubois I."/>
            <person name="Friedman C."/>
            <person name="Gouyvenoux M."/>
            <person name="James R."/>
            <person name="Madan A."/>
            <person name="Mairey-Estrada B."/>
            <person name="Mangenot S."/>
            <person name="Martins N."/>
            <person name="Menard M."/>
            <person name="Oztas S."/>
            <person name="Ratcliffe A."/>
            <person name="Shaffer T."/>
            <person name="Trask B."/>
            <person name="Vacherie B."/>
            <person name="Bellemere C."/>
            <person name="Belser C."/>
            <person name="Besnard-Gonnet M."/>
            <person name="Bartol-Mavel D."/>
            <person name="Boutard M."/>
            <person name="Briez-Silla S."/>
            <person name="Combette S."/>
            <person name="Dufosse-Laurent V."/>
            <person name="Ferron C."/>
            <person name="Lechaplais C."/>
            <person name="Louesse C."/>
            <person name="Muselet D."/>
            <person name="Magdelenat G."/>
            <person name="Pateau E."/>
            <person name="Petit E."/>
            <person name="Sirvain-Trukniewicz P."/>
            <person name="Trybou A."/>
            <person name="Vega-Czarny N."/>
            <person name="Bataille E."/>
            <person name="Bluet E."/>
            <person name="Bordelais I."/>
            <person name="Dubois M."/>
            <person name="Dumont C."/>
            <person name="Guerin T."/>
            <person name="Haffray S."/>
            <person name="Hammadi R."/>
            <person name="Muanga J."/>
            <person name="Pellouin V."/>
            <person name="Robert D."/>
            <person name="Wunderle E."/>
            <person name="Gauguet G."/>
            <person name="Roy A."/>
            <person name="Sainte-Marthe L."/>
            <person name="Verdier J."/>
            <person name="Verdier-Discala C."/>
            <person name="Hillier L.W."/>
            <person name="Fulton L."/>
            <person name="McPherson J."/>
            <person name="Matsuda F."/>
            <person name="Wilson R."/>
            <person name="Scarpelli C."/>
            <person name="Gyapay G."/>
            <person name="Wincker P."/>
            <person name="Saurin W."/>
            <person name="Quetier F."/>
            <person name="Waterston R."/>
            <person name="Hood L."/>
            <person name="Weissenbach J."/>
        </authorList>
    </citation>
    <scope>NUCLEOTIDE SEQUENCE [LARGE SCALE GENOMIC DNA]</scope>
</reference>
<reference key="5">
    <citation type="journal article" date="2004" name="Genome Res.">
        <title>The status, quality, and expansion of the NIH full-length cDNA project: the Mammalian Gene Collection (MGC).</title>
        <authorList>
            <consortium name="The MGC Project Team"/>
        </authorList>
    </citation>
    <scope>NUCLEOTIDE SEQUENCE [LARGE SCALE MRNA] (ISOFORM 1)</scope>
    <source>
        <tissue>Eye</tissue>
        <tissue>Placenta</tissue>
    </source>
</reference>
<reference key="6">
    <citation type="journal article" date="2004" name="Mol. Cell. Biol.">
        <title>Human RNPS1 and its associated factors: a versatile alternative pre-mRNA splicing regulator in vivo.</title>
        <authorList>
            <person name="Sakashita E."/>
            <person name="Tatsumi S."/>
            <person name="Werner D."/>
            <person name="Endo H."/>
            <person name="Mayeda A."/>
        </authorList>
    </citation>
    <scope>INTERACTION WITH RNPS1</scope>
    <scope>SUBCELLULAR LOCATION</scope>
</reference>
<reference key="7">
    <citation type="journal article" date="2011" name="BMC Syst. Biol.">
        <title>Initial characterization of the human central proteome.</title>
        <authorList>
            <person name="Burkard T.R."/>
            <person name="Planyavsky M."/>
            <person name="Kaupe I."/>
            <person name="Breitwieser F.P."/>
            <person name="Buerckstuemmer T."/>
            <person name="Bennett K.L."/>
            <person name="Superti-Furga G."/>
            <person name="Colinge J."/>
        </authorList>
    </citation>
    <scope>IDENTIFICATION BY MASS SPECTROMETRY [LARGE SCALE ANALYSIS]</scope>
</reference>
<reference key="8">
    <citation type="journal article" date="2012" name="Proc. Natl. Acad. Sci. U.S.A.">
        <title>N-terminal acetylome analyses and functional insights of the N-terminal acetyltransferase NatB.</title>
        <authorList>
            <person name="Van Damme P."/>
            <person name="Lasa M."/>
            <person name="Polevoda B."/>
            <person name="Gazquez C."/>
            <person name="Elosegui-Artola A."/>
            <person name="Kim D.S."/>
            <person name="De Juan-Pardo E."/>
            <person name="Demeyer K."/>
            <person name="Hole K."/>
            <person name="Larrea E."/>
            <person name="Timmerman E."/>
            <person name="Prieto J."/>
            <person name="Arnesen T."/>
            <person name="Sherman F."/>
            <person name="Gevaert K."/>
            <person name="Aldabe R."/>
        </authorList>
    </citation>
    <scope>IDENTIFICATION BY MASS SPECTROMETRY [LARGE SCALE ANALYSIS]</scope>
</reference>
<reference key="9">
    <citation type="journal article" date="2013" name="J. Proteome Res.">
        <title>Toward a comprehensive characterization of a human cancer cell phosphoproteome.</title>
        <authorList>
            <person name="Zhou H."/>
            <person name="Di Palma S."/>
            <person name="Preisinger C."/>
            <person name="Peng M."/>
            <person name="Polat A.N."/>
            <person name="Heck A.J."/>
            <person name="Mohammed S."/>
        </authorList>
    </citation>
    <scope>IDENTIFICATION BY MASS SPECTROMETRY [LARGE SCALE ANALYSIS]</scope>
    <source>
        <tissue>Erythroleukemia</tissue>
    </source>
</reference>
<reference key="10">
    <citation type="journal article" date="2014" name="J. Proteomics">
        <title>An enzyme assisted RP-RPLC approach for in-depth analysis of human liver phosphoproteome.</title>
        <authorList>
            <person name="Bian Y."/>
            <person name="Song C."/>
            <person name="Cheng K."/>
            <person name="Dong M."/>
            <person name="Wang F."/>
            <person name="Huang J."/>
            <person name="Sun D."/>
            <person name="Wang L."/>
            <person name="Ye M."/>
            <person name="Zou H."/>
        </authorList>
    </citation>
    <scope>IDENTIFICATION BY MASS SPECTROMETRY [LARGE SCALE ANALYSIS]</scope>
    <source>
        <tissue>Liver</tissue>
    </source>
</reference>
<reference key="11">
    <citation type="journal article" date="2015" name="Proteomics">
        <title>N-terminome analysis of the human mitochondrial proteome.</title>
        <authorList>
            <person name="Vaca Jacome A.S."/>
            <person name="Rabilloud T."/>
            <person name="Schaeffer-Reiss C."/>
            <person name="Rompais M."/>
            <person name="Ayoub D."/>
            <person name="Lane L."/>
            <person name="Bairoch A."/>
            <person name="Van Dorsselaer A."/>
            <person name="Carapito C."/>
        </authorList>
    </citation>
    <scope>IDENTIFICATION BY MASS SPECTROMETRY [LARGE SCALE ANALYSIS]</scope>
</reference>
<reference key="12">
    <citation type="journal article" date="1999" name="J. Mol. Biol.">
        <title>Crystal structure of the conserved subdomain of human protein SRP54M at 2.1 A resolution: evidence for the mechanism of signal peptide binding.</title>
        <authorList>
            <person name="Clemons W.M. Jr."/>
            <person name="Gowda K."/>
            <person name="Black S.D."/>
            <person name="Zwieb C."/>
            <person name="Ramakrishnan V."/>
        </authorList>
    </citation>
    <scope>X-RAY CRYSTALLOGRAPHY (2.1 ANGSTROMS) OF 326-432</scope>
</reference>
<reference key="13">
    <citation type="journal article" date="2002" name="Nat. Struct. Biol.">
        <title>Induced structural changes of 7SL RNA during the assembly of human signal recognition particle.</title>
        <authorList>
            <person name="Kuglstatter A."/>
            <person name="Oubridge C."/>
            <person name="Nagai K."/>
        </authorList>
    </citation>
    <scope>X-RAY CRYSTALLOGRAPHY (3.1 ANGSTROMS) OF 323-441 IN COMPLEX WITH SRP19 AND 7SL RNA</scope>
</reference>
<reference key="14">
    <citation type="journal article" date="2017" name="J. Clin. Invest.">
        <title>Mutations in signal recognition particle SRP54 cause syndromic neutropenia with Shwachman-Diamond-like features.</title>
        <authorList>
            <person name="Carapito R."/>
            <person name="Konantz M."/>
            <person name="Paillard C."/>
            <person name="Miao Z."/>
            <person name="Pichot A."/>
            <person name="Leduc M.S."/>
            <person name="Yang Y."/>
            <person name="Bergstrom K.L."/>
            <person name="Mahoney D.H."/>
            <person name="Shardy D.L."/>
            <person name="Alsaleh G."/>
            <person name="Naegely L."/>
            <person name="Kolmer A."/>
            <person name="Paul N."/>
            <person name="Hanauer A."/>
            <person name="Rolli V."/>
            <person name="Mueller J.S."/>
            <person name="Alghisi E."/>
            <person name="Sauteur L."/>
            <person name="Macquin C."/>
            <person name="Morlon A."/>
            <person name="Sancho C.S."/>
            <person name="Amati-Bonneau P."/>
            <person name="Procaccio V."/>
            <person name="Mosca-Boidron A.L."/>
            <person name="Marle N."/>
            <person name="Osmani N."/>
            <person name="Lefebvre O."/>
            <person name="Goetz J.G."/>
            <person name="Unal S."/>
            <person name="Akarsu N.A."/>
            <person name="Radosavljevic M."/>
            <person name="Chenard M.P."/>
            <person name="Rialland F."/>
            <person name="Grain A."/>
            <person name="Bene M.C."/>
            <person name="Eveillard M."/>
            <person name="Vincent M."/>
            <person name="Guy J."/>
            <person name="Faivre L."/>
            <person name="Thauvin-Robinet C."/>
            <person name="Thevenon J."/>
            <person name="Myers K."/>
            <person name="Fleming M.D."/>
            <person name="Shimamura A."/>
            <person name="Bottollier-Lemallaz E."/>
            <person name="Westhof E."/>
            <person name="Lengerke C."/>
            <person name="Isidor B."/>
            <person name="Bahram S."/>
        </authorList>
    </citation>
    <scope>VARIANTS SCN8 ALA-115; THR-117 DEL AND GLU-226</scope>
    <scope>CHARACTERIZATION OF VARIANTS SCN8 ALA-115; THR-117 DEL AND GLU-226</scope>
    <scope>CATALYTIC ACTIVITY</scope>
    <scope>FUNCTION</scope>
</reference>
<reference key="15">
    <citation type="journal article" date="2018" name="Blood">
        <title>Mutations in the SRP54 gene cause severe congenital neutropenia as well as Shwachman-Diamond-like syndrome.</title>
        <authorList>
            <person name="Bellanne-Chantelot C."/>
            <person name="Schmaltz-Panneau B."/>
            <person name="Marty C."/>
            <person name="Fenneteau O."/>
            <person name="Callebaut I."/>
            <person name="Clauin S."/>
            <person name="Docet A."/>
            <person name="Damaj G.L."/>
            <person name="Leblanc T."/>
            <person name="Pellier I."/>
            <person name="Stoven C."/>
            <person name="Souquere S."/>
            <person name="Antony-Debre I."/>
            <person name="Beaupain B."/>
            <person name="Aladjidi N."/>
            <person name="Barlogis V."/>
            <person name="Bauduer F."/>
            <person name="Bensaid P."/>
            <person name="Boespflug-Tanguy O."/>
            <person name="Berger C."/>
            <person name="Bertrand Y."/>
            <person name="Carausu L."/>
            <person name="Fieschi C."/>
            <person name="Galambrun C."/>
            <person name="Schmidt A."/>
            <person name="Journel H."/>
            <person name="Mazingue F."/>
            <person name="Nelken B."/>
            <person name="Quah T.C."/>
            <person name="Oksenhendler E."/>
            <person name="Ouachee M."/>
            <person name="Pasquet M."/>
            <person name="Saada V."/>
            <person name="Suarez F."/>
            <person name="Pierron G."/>
            <person name="Vainchenker W."/>
            <person name="Plo I."/>
            <person name="Donadieu J."/>
        </authorList>
    </citation>
    <scope>FUNCTION</scope>
    <scope>DEVELOPMENTAL STAGE</scope>
    <scope>SUBCELLULAR LOCATION</scope>
    <scope>VARIANTS SCN8 ARG-113; THR-117 DEL; TYR-118; TYR-136; ASP-223; GLU-226 AND ASP-274</scope>
    <scope>CHARACTERIZATION OF VARIANTS SCN8 THR-117 DEL; TYR-118; TYR-136 AND ASP-223</scope>
</reference>
<reference evidence="12" key="16">
    <citation type="journal article" date="2021" name="Sci. Adv.">
        <title>Receptor compaction and GTPase rearrangement drive SRP-mediated cotranslational protein translocation into the ER.</title>
        <authorList>
            <person name="Lee J.H."/>
            <person name="Jomaa A."/>
            <person name="Jomaa A."/>
            <person name="Chung S."/>
            <person name="Hwang Fu Y.H."/>
            <person name="Qian R."/>
            <person name="Sun X."/>
            <person name="Hsieh H.H."/>
            <person name="Chandrasekar S."/>
            <person name="Bi X."/>
            <person name="Mattei S."/>
            <person name="Boehringer D."/>
            <person name="Weiss S."/>
            <person name="Ban N."/>
            <person name="Shan S.O."/>
        </authorList>
    </citation>
    <scope>STRUCTURE BY ELECTRON MICROSCOPY (3.20 ANGSTROMS) OF SIGNAL RECOGNITION PARTICLE IN COMPLEX WITH RIBOSOME NASCENT CHAIN COMPLEX AND THE SRP RECEPTOR</scope>
    <scope>FUNCTION</scope>
    <scope>CATALYTIC ACTIVITY</scope>
    <scope>INTERACTION WITH SRPRA</scope>
    <scope>CHARACTERIZATION OF VARIANT SCN8 GLU-226</scope>
    <scope>DOMAIN</scope>
</reference>
<sequence>MVLADLGRKITSALRSLSNATIINEEVLNAMLKEVCTALLEADVNIKLVKQLRENVKSAIDLEEMASGLNKRKMIQHAVFKELVKLVDPGVKAWTPTKGKQNVIMFVGLQGSGKTTTCSKLAYYYQRKGWKTCLICADTFRAGAFDQLKQNATKARIPFYGSYTEMDPVIIASEGVEKFKNENFEIIIVDTSGRHKQEDSLFEEMLQVANAIQPDNIVYVMDASIGQACEAQAKAFKDKVDVASVIVTKLDGHAKGGGALSAVAATKSPIIFIGTGEHIDDFEPFKTQPFISKLLGMGDIEGLIDKVNELKLDDNEALIEKLKHGQFTLRDMYEQFQNIMKMGPFSQILGMIPGFGTDFMSKGNEQESMARLKKLMTIMDSMNDQELDSTDGAKVFSKQPGRIQRVARGSGVSTRDVQELLTQYTKFAQMVKKMGGIKGLFKGGDMSKNVSQSQMAKLNQQMAKMMDPRVLHHMGGMAGLQSMMRQFQQGAAGNMKGMMGFNNM</sequence>
<accession>P61011</accession>
<accession>B2R759</accession>
<accession>B4DUW6</accession>
<accession>P13624</accession>
<proteinExistence type="evidence at protein level"/>
<comment type="function">
    <text evidence="2 5 6 7">Component of the signal recognition particle (SRP) complex, a ribonucleoprotein complex that mediates the cotranslational targeting of secretory and membrane proteins to the endoplasmic reticulum (ER) (PubMed:34020957). As part of the SRP complex, associates with the SRP receptor (SR) component SRPRA to target secretory proteins to the endoplasmic reticulum membrane (PubMed:34020957). Binds to the signal sequence of presecretory proteins when they emerge from the ribosomes (PubMed:34020957). Displays basal GTPase activity, and stimulates reciprocal GTPase activation of the SR subunit SRPRA (PubMed:28972538, PubMed:34020957). Forms a guanosine 5'-triphosphate (GTP)-dependent complex with the SR subunit SRPRA (PubMed:34020957). SR compaction and GTPase mediated rearrangement of SR drive SRP-mediated cotranslational protein translocation into the ER (PubMed:34020957). Requires the presence of SRP9/SRP14 and/or SRP19 to stably interact with RNA (By similarity). Plays a role in proliferation and differentiation of granulocytic cells, neutrophils migration capacity and exocrine pancreas development (PubMed:28972538, PubMed:29914977).</text>
</comment>
<comment type="catalytic activity">
    <reaction evidence="5">
        <text>GTP + H2O = GDP + phosphate + H(+)</text>
        <dbReference type="Rhea" id="RHEA:19669"/>
        <dbReference type="ChEBI" id="CHEBI:15377"/>
        <dbReference type="ChEBI" id="CHEBI:15378"/>
        <dbReference type="ChEBI" id="CHEBI:37565"/>
        <dbReference type="ChEBI" id="CHEBI:43474"/>
        <dbReference type="ChEBI" id="CHEBI:58189"/>
        <dbReference type="EC" id="3.6.5.4"/>
    </reaction>
    <physiologicalReaction direction="left-to-right" evidence="5">
        <dbReference type="Rhea" id="RHEA:19670"/>
    </physiologicalReaction>
</comment>
<comment type="subunit">
    <text evidence="3 4 7">Component of a signal recognition particle (SRP) complex that consists of a 7SL RNA molecule of 300 nucleotides and six protein subunits: SRP72, SRP68, SRP54, SRP19, SRP14 and SRP9 (PubMed:12244299). Interacts with RNPS1 (PubMed:14729963). Interacts with the SRP receptor subunit SRPRA (PubMed:34020957).</text>
</comment>
<comment type="interaction">
    <interactant intactId="EBI-2854176">
        <id>P61011</id>
    </interactant>
    <interactant intactId="EBI-726981">
        <id>P08240</id>
        <label>SRPRA</label>
    </interactant>
    <organismsDiffer>false</organismsDiffer>
    <experiments>2</experiments>
</comment>
<comment type="subcellular location">
    <subcellularLocation>
        <location evidence="4">Nucleus speckle</location>
    </subcellularLocation>
    <subcellularLocation>
        <location evidence="4 6">Cytoplasm</location>
    </subcellularLocation>
    <subcellularLocation>
        <location evidence="6">Endoplasmic reticulum</location>
    </subcellularLocation>
</comment>
<comment type="alternative products">
    <event type="alternative splicing"/>
    <isoform>
        <id>P61011-1</id>
        <name>1</name>
        <sequence type="displayed"/>
    </isoform>
    <isoform>
        <id>P61011-2</id>
        <name>2</name>
        <sequence type="described" ref="VSP_043696"/>
    </isoform>
</comment>
<comment type="developmental stage">
    <text evidence="6">up-regulated during granulocytic differentiation.</text>
</comment>
<comment type="domain">
    <text evidence="7">The NG domain, also named G domain, is a special guanosine triphosphatase (GTPase) domain, which binds GTP and forms a guanosine 5'-triphosphate (GTP)-dependent complex with a homologous NG domain in the SRP receptor subunit SRPRA (PubMed:34020957). The two NG domains undergo cooperative rearrangements upon their assembly, which culminate in the reciprocal activation of the GTPase activity of one another (PubMed:34020957). SRP receptor compaction upon binding with cargo-loaded SRP and GTPase rearrangement drive SRP-mediated cotranslational protein translocation into the ER (PubMed:34020957).</text>
</comment>
<comment type="domain">
    <text evidence="7">The M domain binds the 7SL RNA in presence of SRP19 and binds the signal sequence of presecretory proteins.</text>
</comment>
<comment type="disease" evidence="5 6 7">
    <disease id="DI-05750">
        <name>Neutropenia, severe congenital 8, autosomal dominant</name>
        <acronym>SCN8</acronym>
        <description>A form of severe congenital neutropenia, a disorder of hematopoiesis characterized by maturation arrest of granulopoiesis at the level of promyelocytes with peripheral blood absolute neutrophil counts below 0.5 x 10(9)/l and early onset of severe bacterial infections.</description>
        <dbReference type="MIM" id="618752"/>
    </disease>
    <text>The disease is caused by variants affecting the gene represented in this entry.</text>
</comment>
<comment type="similarity">
    <text evidence="10">Belongs to the GTP-binding SRP family. SRP54 subfamily.</text>
</comment>
<comment type="online information" name="Wikipedia">
    <link uri="https://en.wikipedia.org/wiki/Signal_recognition_particle"/>
    <text>Signal recognition particle entry</text>
</comment>
<dbReference type="EC" id="3.6.5.4" evidence="5 7"/>
<dbReference type="EMBL" id="X86373">
    <property type="protein sequence ID" value="CAA60132.1"/>
    <property type="molecule type" value="Genomic_DNA"/>
</dbReference>
<dbReference type="EMBL" id="U51920">
    <property type="protein sequence ID" value="AAC50994.1"/>
    <property type="molecule type" value="mRNA"/>
</dbReference>
<dbReference type="EMBL" id="AK300824">
    <property type="protein sequence ID" value="BAG62478.1"/>
    <property type="molecule type" value="mRNA"/>
</dbReference>
<dbReference type="EMBL" id="AK312853">
    <property type="protein sequence ID" value="BAG35706.1"/>
    <property type="molecule type" value="mRNA"/>
</dbReference>
<dbReference type="EMBL" id="AL049776">
    <property type="status" value="NOT_ANNOTATED_CDS"/>
    <property type="molecule type" value="Genomic_DNA"/>
</dbReference>
<dbReference type="EMBL" id="BC000652">
    <property type="protein sequence ID" value="AAH00652.1"/>
    <property type="molecule type" value="mRNA"/>
</dbReference>
<dbReference type="EMBL" id="BC003389">
    <property type="protein sequence ID" value="AAH03389.1"/>
    <property type="molecule type" value="mRNA"/>
</dbReference>
<dbReference type="CCDS" id="CCDS9652.1">
    <molecule id="P61011-1"/>
</dbReference>
<dbReference type="PIR" id="S54143">
    <property type="entry name" value="S54143"/>
</dbReference>
<dbReference type="RefSeq" id="NP_001139754.1">
    <molecule id="P61011-2"/>
    <property type="nucleotide sequence ID" value="NM_001146282.2"/>
</dbReference>
<dbReference type="RefSeq" id="NP_003127.1">
    <molecule id="P61011-1"/>
    <property type="nucleotide sequence ID" value="NM_003136.4"/>
</dbReference>
<dbReference type="RefSeq" id="XP_011535408.1">
    <molecule id="P61011-1"/>
    <property type="nucleotide sequence ID" value="XM_011537106.1"/>
</dbReference>
<dbReference type="RefSeq" id="XP_054232621.1">
    <molecule id="P61011-1"/>
    <property type="nucleotide sequence ID" value="XM_054376646.1"/>
</dbReference>
<dbReference type="PDB" id="1MFQ">
    <property type="method" value="X-ray"/>
    <property type="resolution" value="3.10 A"/>
    <property type="chains" value="C=323-441"/>
</dbReference>
<dbReference type="PDB" id="1QB2">
    <property type="method" value="X-ray"/>
    <property type="resolution" value="2.10 A"/>
    <property type="chains" value="A/B=326-434"/>
</dbReference>
<dbReference type="PDB" id="5L3Q">
    <property type="method" value="X-ray"/>
    <property type="resolution" value="3.20 A"/>
    <property type="chains" value="A/C=1-436"/>
</dbReference>
<dbReference type="PDB" id="6Y2Z">
    <property type="method" value="X-ray"/>
    <property type="resolution" value="2.15 A"/>
    <property type="chains" value="A/B=1-296"/>
</dbReference>
<dbReference type="PDB" id="6Y30">
    <property type="method" value="X-ray"/>
    <property type="resolution" value="2.65 A"/>
    <property type="chains" value="A/B=1-296"/>
</dbReference>
<dbReference type="PDB" id="6Y31">
    <property type="method" value="X-ray"/>
    <property type="resolution" value="4.00 A"/>
    <property type="chains" value="A/B/C/D=1-296"/>
</dbReference>
<dbReference type="PDB" id="6Y32">
    <property type="method" value="X-ray"/>
    <property type="resolution" value="2.60 A"/>
    <property type="chains" value="A/C/E/G=1-296"/>
</dbReference>
<dbReference type="PDB" id="7NFX">
    <property type="method" value="EM"/>
    <property type="resolution" value="3.20 A"/>
    <property type="chains" value="x=1-504"/>
</dbReference>
<dbReference type="PDB" id="7QWQ">
    <property type="method" value="EM"/>
    <property type="resolution" value="2.83 A"/>
    <property type="chains" value="x=1-504"/>
</dbReference>
<dbReference type="PDBsum" id="1MFQ"/>
<dbReference type="PDBsum" id="1QB2"/>
<dbReference type="PDBsum" id="5L3Q"/>
<dbReference type="PDBsum" id="6Y2Z"/>
<dbReference type="PDBsum" id="6Y30"/>
<dbReference type="PDBsum" id="6Y31"/>
<dbReference type="PDBsum" id="6Y32"/>
<dbReference type="PDBsum" id="7NFX"/>
<dbReference type="PDBsum" id="7QWQ"/>
<dbReference type="EMDB" id="EMD-12303"/>
<dbReference type="EMDB" id="EMD-14191"/>
<dbReference type="SMR" id="P61011"/>
<dbReference type="BioGRID" id="112607">
    <property type="interactions" value="184"/>
</dbReference>
<dbReference type="ComplexPortal" id="CPX-2652">
    <property type="entry name" value="Signal recognition particle"/>
</dbReference>
<dbReference type="FunCoup" id="P61011">
    <property type="interactions" value="3442"/>
</dbReference>
<dbReference type="IntAct" id="P61011">
    <property type="interactions" value="72"/>
</dbReference>
<dbReference type="MINT" id="P61011"/>
<dbReference type="STRING" id="9606.ENSP00000451818"/>
<dbReference type="ChEMBL" id="CHEMBL4295786"/>
<dbReference type="TCDB" id="3.A.5.9.1">
    <property type="family name" value="the general secretory pathway (sec) family"/>
</dbReference>
<dbReference type="CarbonylDB" id="P61011"/>
<dbReference type="GlyGen" id="P61011">
    <property type="glycosylation" value="3 sites, 2 N-linked glycans (1 site), 1 O-linked glycan (2 sites)"/>
</dbReference>
<dbReference type="iPTMnet" id="P61011"/>
<dbReference type="MetOSite" id="P61011"/>
<dbReference type="PhosphoSitePlus" id="P61011"/>
<dbReference type="SwissPalm" id="P61011"/>
<dbReference type="BioMuta" id="SRP54"/>
<dbReference type="DMDM" id="46577650"/>
<dbReference type="jPOST" id="P61011"/>
<dbReference type="MassIVE" id="P61011"/>
<dbReference type="PaxDb" id="9606-ENSP00000451818"/>
<dbReference type="PeptideAtlas" id="P61011"/>
<dbReference type="ProteomicsDB" id="57247">
    <molecule id="P61011-1"/>
</dbReference>
<dbReference type="ProteomicsDB" id="57248">
    <molecule id="P61011-2"/>
</dbReference>
<dbReference type="Pumba" id="P61011"/>
<dbReference type="Antibodypedia" id="23175">
    <property type="antibodies" value="219 antibodies from 29 providers"/>
</dbReference>
<dbReference type="DNASU" id="6729"/>
<dbReference type="Ensembl" id="ENST00000216774.11">
    <molecule id="P61011-1"/>
    <property type="protein sequence ID" value="ENSP00000216774.6"/>
    <property type="gene ID" value="ENSG00000100883.13"/>
</dbReference>
<dbReference type="Ensembl" id="ENST00000556994.5">
    <molecule id="P61011-1"/>
    <property type="protein sequence ID" value="ENSP00000451818.1"/>
    <property type="gene ID" value="ENSG00000100883.13"/>
</dbReference>
<dbReference type="Ensembl" id="ENST00000677647.1">
    <molecule id="P61011-1"/>
    <property type="protein sequence ID" value="ENSP00000504673.1"/>
    <property type="gene ID" value="ENSG00000100883.13"/>
</dbReference>
<dbReference type="Ensembl" id="ENST00000678963.1">
    <molecule id="P61011-1"/>
    <property type="protein sequence ID" value="ENSP00000504518.1"/>
    <property type="gene ID" value="ENSG00000100883.13"/>
</dbReference>
<dbReference type="GeneID" id="6729"/>
<dbReference type="KEGG" id="hsa:6729"/>
<dbReference type="MANE-Select" id="ENST00000216774.11">
    <property type="protein sequence ID" value="ENSP00000216774.6"/>
    <property type="RefSeq nucleotide sequence ID" value="NM_003136.4"/>
    <property type="RefSeq protein sequence ID" value="NP_003127.1"/>
</dbReference>
<dbReference type="UCSC" id="uc001wso.4">
    <molecule id="P61011-1"/>
    <property type="organism name" value="human"/>
</dbReference>
<dbReference type="AGR" id="HGNC:11301"/>
<dbReference type="CTD" id="6729"/>
<dbReference type="DisGeNET" id="6729"/>
<dbReference type="GeneCards" id="SRP54"/>
<dbReference type="GeneReviews" id="SRP54"/>
<dbReference type="HGNC" id="HGNC:11301">
    <property type="gene designation" value="SRP54"/>
</dbReference>
<dbReference type="HPA" id="ENSG00000100883">
    <property type="expression patterns" value="Low tissue specificity"/>
</dbReference>
<dbReference type="MalaCards" id="SRP54"/>
<dbReference type="MIM" id="604857">
    <property type="type" value="gene"/>
</dbReference>
<dbReference type="MIM" id="618752">
    <property type="type" value="phenotype"/>
</dbReference>
<dbReference type="neXtProt" id="NX_P61011"/>
<dbReference type="OpenTargets" id="ENSG00000100883"/>
<dbReference type="Orphanet" id="675767">
    <property type="disease" value="Severe congenital neutropenia-developmental delay syndrome due to SRP54 deficiency"/>
</dbReference>
<dbReference type="PharmGKB" id="PA36125"/>
<dbReference type="VEuPathDB" id="HostDB:ENSG00000100883"/>
<dbReference type="eggNOG" id="KOG0780">
    <property type="taxonomic scope" value="Eukaryota"/>
</dbReference>
<dbReference type="GeneTree" id="ENSGT00550000074824"/>
<dbReference type="InParanoid" id="P61011"/>
<dbReference type="OMA" id="GMTGQDA"/>
<dbReference type="OrthoDB" id="10250817at2759"/>
<dbReference type="PAN-GO" id="P61011">
    <property type="GO annotations" value="6 GO annotations based on evolutionary models"/>
</dbReference>
<dbReference type="PhylomeDB" id="P61011"/>
<dbReference type="TreeFam" id="TF106249"/>
<dbReference type="PathwayCommons" id="P61011"/>
<dbReference type="Reactome" id="R-HSA-1799339">
    <property type="pathway name" value="SRP-dependent cotranslational protein targeting to membrane"/>
</dbReference>
<dbReference type="SignaLink" id="P61011"/>
<dbReference type="SIGNOR" id="P61011"/>
<dbReference type="BioGRID-ORCS" id="6729">
    <property type="hits" value="827 hits in 1184 CRISPR screens"/>
</dbReference>
<dbReference type="CD-CODE" id="804901D1">
    <property type="entry name" value="Nuclear speckle"/>
</dbReference>
<dbReference type="ChiTaRS" id="SRP54">
    <property type="organism name" value="human"/>
</dbReference>
<dbReference type="EvolutionaryTrace" id="P61011"/>
<dbReference type="GenomeRNAi" id="6729"/>
<dbReference type="Pharos" id="P61011">
    <property type="development level" value="Tbio"/>
</dbReference>
<dbReference type="PRO" id="PR:P61011"/>
<dbReference type="Proteomes" id="UP000005640">
    <property type="component" value="Chromosome 14"/>
</dbReference>
<dbReference type="RNAct" id="P61011">
    <property type="molecule type" value="protein"/>
</dbReference>
<dbReference type="Bgee" id="ENSG00000100883">
    <property type="expression patterns" value="Expressed in body of pancreas and 205 other cell types or tissues"/>
</dbReference>
<dbReference type="ExpressionAtlas" id="P61011">
    <property type="expression patterns" value="baseline and differential"/>
</dbReference>
<dbReference type="GO" id="GO:0005737">
    <property type="term" value="C:cytoplasm"/>
    <property type="evidence" value="ECO:0000314"/>
    <property type="project" value="MGI"/>
</dbReference>
<dbReference type="GO" id="GO:0005829">
    <property type="term" value="C:cytosol"/>
    <property type="evidence" value="ECO:0000314"/>
    <property type="project" value="HPA"/>
</dbReference>
<dbReference type="GO" id="GO:0005783">
    <property type="term" value="C:endoplasmic reticulum"/>
    <property type="evidence" value="ECO:0007669"/>
    <property type="project" value="UniProtKB-SubCell"/>
</dbReference>
<dbReference type="GO" id="GO:0016607">
    <property type="term" value="C:nuclear speck"/>
    <property type="evidence" value="ECO:0007669"/>
    <property type="project" value="UniProtKB-SubCell"/>
</dbReference>
<dbReference type="GO" id="GO:0005634">
    <property type="term" value="C:nucleus"/>
    <property type="evidence" value="ECO:0000314"/>
    <property type="project" value="UniProtKB"/>
</dbReference>
<dbReference type="GO" id="GO:0005786">
    <property type="term" value="C:signal recognition particle, endoplasmic reticulum targeting"/>
    <property type="evidence" value="ECO:0000314"/>
    <property type="project" value="UniProtKB"/>
</dbReference>
<dbReference type="GO" id="GO:0008312">
    <property type="term" value="F:7S RNA binding"/>
    <property type="evidence" value="ECO:0000314"/>
    <property type="project" value="UniProtKB"/>
</dbReference>
<dbReference type="GO" id="GO:0016887">
    <property type="term" value="F:ATP hydrolysis activity"/>
    <property type="evidence" value="ECO:0007669"/>
    <property type="project" value="InterPro"/>
</dbReference>
<dbReference type="GO" id="GO:0030942">
    <property type="term" value="F:endoplasmic reticulum signal peptide binding"/>
    <property type="evidence" value="ECO:0000314"/>
    <property type="project" value="UniProtKB"/>
</dbReference>
<dbReference type="GO" id="GO:0019003">
    <property type="term" value="F:GDP binding"/>
    <property type="evidence" value="ECO:0000314"/>
    <property type="project" value="UniProtKB"/>
</dbReference>
<dbReference type="GO" id="GO:0005525">
    <property type="term" value="F:GTP binding"/>
    <property type="evidence" value="ECO:0000314"/>
    <property type="project" value="UniProtKB"/>
</dbReference>
<dbReference type="GO" id="GO:0003924">
    <property type="term" value="F:GTPase activity"/>
    <property type="evidence" value="ECO:0000315"/>
    <property type="project" value="UniProtKB"/>
</dbReference>
<dbReference type="GO" id="GO:0043021">
    <property type="term" value="F:ribonucleoprotein complex binding"/>
    <property type="evidence" value="ECO:0000314"/>
    <property type="project" value="MGI"/>
</dbReference>
<dbReference type="GO" id="GO:0003723">
    <property type="term" value="F:RNA binding"/>
    <property type="evidence" value="ECO:0007005"/>
    <property type="project" value="UniProtKB"/>
</dbReference>
<dbReference type="GO" id="GO:0031017">
    <property type="term" value="P:exocrine pancreas development"/>
    <property type="evidence" value="ECO:0000250"/>
    <property type="project" value="UniProtKB"/>
</dbReference>
<dbReference type="GO" id="GO:0030851">
    <property type="term" value="P:granulocyte differentiation"/>
    <property type="evidence" value="ECO:0000315"/>
    <property type="project" value="UniProtKB"/>
</dbReference>
<dbReference type="GO" id="GO:0030593">
    <property type="term" value="P:neutrophil chemotaxis"/>
    <property type="evidence" value="ECO:0000250"/>
    <property type="project" value="UniProtKB"/>
</dbReference>
<dbReference type="GO" id="GO:0045047">
    <property type="term" value="P:protein targeting to ER"/>
    <property type="evidence" value="ECO:0000315"/>
    <property type="project" value="UniProtKB"/>
</dbReference>
<dbReference type="GO" id="GO:0006614">
    <property type="term" value="P:SRP-dependent cotranslational protein targeting to membrane"/>
    <property type="evidence" value="ECO:0000305"/>
    <property type="project" value="MGI"/>
</dbReference>
<dbReference type="GO" id="GO:0006617">
    <property type="term" value="P:SRP-dependent cotranslational protein targeting to membrane, signal sequence recognition"/>
    <property type="evidence" value="ECO:0000250"/>
    <property type="project" value="UniProtKB"/>
</dbReference>
<dbReference type="GO" id="GO:0006616">
    <property type="term" value="P:SRP-dependent cotranslational protein targeting to membrane, translocation"/>
    <property type="evidence" value="ECO:0000250"/>
    <property type="project" value="UniProtKB"/>
</dbReference>
<dbReference type="CDD" id="cd17875">
    <property type="entry name" value="SRP54_G"/>
    <property type="match status" value="1"/>
</dbReference>
<dbReference type="FunFam" id="1.10.260.30:FF:000002">
    <property type="entry name" value="Signal recognition particle 54 kDa protein"/>
    <property type="match status" value="1"/>
</dbReference>
<dbReference type="FunFam" id="1.20.120.140:FF:000003">
    <property type="entry name" value="Signal recognition particle 54 kDa protein"/>
    <property type="match status" value="1"/>
</dbReference>
<dbReference type="FunFam" id="3.40.50.300:FF:000022">
    <property type="entry name" value="Signal recognition particle 54 kDa subunit"/>
    <property type="match status" value="1"/>
</dbReference>
<dbReference type="Gene3D" id="3.40.50.300">
    <property type="entry name" value="P-loop containing nucleotide triphosphate hydrolases"/>
    <property type="match status" value="1"/>
</dbReference>
<dbReference type="Gene3D" id="1.20.120.140">
    <property type="entry name" value="Signal recognition particle SRP54, nucleotide-binding domain"/>
    <property type="match status" value="1"/>
</dbReference>
<dbReference type="Gene3D" id="1.10.260.30">
    <property type="entry name" value="Signal recognition particle, SRP54 subunit, M-domain"/>
    <property type="match status" value="1"/>
</dbReference>
<dbReference type="HAMAP" id="MF_00306">
    <property type="entry name" value="SRP54"/>
    <property type="match status" value="1"/>
</dbReference>
<dbReference type="InterPro" id="IPR003593">
    <property type="entry name" value="AAA+_ATPase"/>
</dbReference>
<dbReference type="InterPro" id="IPR027417">
    <property type="entry name" value="P-loop_NTPase"/>
</dbReference>
<dbReference type="InterPro" id="IPR036891">
    <property type="entry name" value="Signal_recog_part_SRP54_M_sf"/>
</dbReference>
<dbReference type="InterPro" id="IPR013822">
    <property type="entry name" value="Signal_recog_particl_SRP54_hlx"/>
</dbReference>
<dbReference type="InterPro" id="IPR004125">
    <property type="entry name" value="Signal_recog_particle_SRP54_M"/>
</dbReference>
<dbReference type="InterPro" id="IPR036225">
    <property type="entry name" value="SRP/SRP_N"/>
</dbReference>
<dbReference type="InterPro" id="IPR022941">
    <property type="entry name" value="SRP54"/>
</dbReference>
<dbReference type="InterPro" id="IPR006325">
    <property type="entry name" value="SRP54_euk"/>
</dbReference>
<dbReference type="InterPro" id="IPR000897">
    <property type="entry name" value="SRP54_GTPase_dom"/>
</dbReference>
<dbReference type="InterPro" id="IPR042101">
    <property type="entry name" value="SRP54_N_sf"/>
</dbReference>
<dbReference type="NCBIfam" id="TIGR01425">
    <property type="entry name" value="SRP54_euk"/>
    <property type="match status" value="1"/>
</dbReference>
<dbReference type="PANTHER" id="PTHR11564">
    <property type="entry name" value="SIGNAL RECOGNITION PARTICLE 54K PROTEIN SRP54"/>
    <property type="match status" value="1"/>
</dbReference>
<dbReference type="PANTHER" id="PTHR11564:SF5">
    <property type="entry name" value="SIGNAL RECOGNITION PARTICLE SUBUNIT SRP54"/>
    <property type="match status" value="1"/>
</dbReference>
<dbReference type="Pfam" id="PF00448">
    <property type="entry name" value="SRP54"/>
    <property type="match status" value="1"/>
</dbReference>
<dbReference type="Pfam" id="PF02881">
    <property type="entry name" value="SRP54_N"/>
    <property type="match status" value="1"/>
</dbReference>
<dbReference type="Pfam" id="PF02978">
    <property type="entry name" value="SRP_SPB"/>
    <property type="match status" value="1"/>
</dbReference>
<dbReference type="SMART" id="SM00382">
    <property type="entry name" value="AAA"/>
    <property type="match status" value="1"/>
</dbReference>
<dbReference type="SMART" id="SM00962">
    <property type="entry name" value="SRP54"/>
    <property type="match status" value="1"/>
</dbReference>
<dbReference type="SMART" id="SM00963">
    <property type="entry name" value="SRP54_N"/>
    <property type="match status" value="1"/>
</dbReference>
<dbReference type="SUPFAM" id="SSF47364">
    <property type="entry name" value="Domain of the SRP/SRP receptor G-proteins"/>
    <property type="match status" value="1"/>
</dbReference>
<dbReference type="SUPFAM" id="SSF52540">
    <property type="entry name" value="P-loop containing nucleoside triphosphate hydrolases"/>
    <property type="match status" value="1"/>
</dbReference>
<dbReference type="SUPFAM" id="SSF47446">
    <property type="entry name" value="Signal peptide-binding domain"/>
    <property type="match status" value="1"/>
</dbReference>
<dbReference type="PROSITE" id="PS00300">
    <property type="entry name" value="SRP54"/>
    <property type="match status" value="1"/>
</dbReference>
<evidence type="ECO:0000250" key="1"/>
<evidence type="ECO:0000250" key="2">
    <source>
        <dbReference type="UniProtKB" id="P61010"/>
    </source>
</evidence>
<evidence type="ECO:0000269" key="3">
    <source>
    </source>
</evidence>
<evidence type="ECO:0000269" key="4">
    <source>
    </source>
</evidence>
<evidence type="ECO:0000269" key="5">
    <source>
    </source>
</evidence>
<evidence type="ECO:0000269" key="6">
    <source>
    </source>
</evidence>
<evidence type="ECO:0000269" key="7">
    <source>
    </source>
</evidence>
<evidence type="ECO:0000303" key="8">
    <source>
    </source>
</evidence>
<evidence type="ECO:0000303" key="9">
    <source>
    </source>
</evidence>
<evidence type="ECO:0000305" key="10"/>
<evidence type="ECO:0000312" key="11">
    <source>
        <dbReference type="HGNC" id="HGNC:11301"/>
    </source>
</evidence>
<evidence type="ECO:0007744" key="12">
    <source>
        <dbReference type="PDB" id="7NFX"/>
    </source>
</evidence>
<evidence type="ECO:0007829" key="13">
    <source>
        <dbReference type="PDB" id="1QB2"/>
    </source>
</evidence>
<evidence type="ECO:0007829" key="14">
    <source>
        <dbReference type="PDB" id="6Y2Z"/>
    </source>
</evidence>
<evidence type="ECO:0007829" key="15">
    <source>
        <dbReference type="PDB" id="6Y30"/>
    </source>
</evidence>
<evidence type="ECO:0007829" key="16">
    <source>
        <dbReference type="PDB" id="6Y32"/>
    </source>
</evidence>